<comment type="function">
    <text evidence="2 3">Transports viral genome to neighboring plant cells directly through plasmosdesmata, without any budding. The movement protein allows efficient cell to cell propagation, by bypassing the host cell wall barrier. Forms a ribonucleoprotein complex with viral RNA. Binds microtubules and modulates microtubule stability. Can bind double-stranded DNA. Triggers host hypersensitive defense reaction in incompatible plants harboring resistance (R) proteins.</text>
</comment>
<comment type="subunit">
    <text evidence="1 2 3">Binds to host RBCS at the plasmodesmata; this interaction seems required for viral systemic movement (By similarity). In resistant plants, interacts with host MBP2C at host microtubules; this interaction prevents virus cell to cell movement. In resistant plants, interacts with host resistance (R) protein (e.g. tomato ToMV resistance protein TM-2(2), AC Q71BG9) at the host plasma membrane; this interaction triggers host defense responses leading to programmed cell death (By similarity).</text>
</comment>
<comment type="subcellular location">
    <subcellularLocation>
        <location evidence="3">Host cytoplasm</location>
        <location evidence="3">Host cytoskeleton</location>
    </subcellularLocation>
    <subcellularLocation>
        <location evidence="3">Host cell junction</location>
        <location evidence="3">Host plasmodesma</location>
    </subcellularLocation>
    <text evidence="2 3">Binds to the host cytoskeleton before being transported to the host plasmodesmata. Observed in virus replication complexes (VRCs) of tobamovirus infected host cells (By similarity). In resistant plants, targeted to the host plasma membrane via the interaction with host resistance (R) protein TM-2 (e.g. tomato ToMV resistance protein TM-2(2), AC Q71BG9) (By similarity).</text>
</comment>
<comment type="similarity">
    <text evidence="5">Belongs to the tobamovirus movement protein family.</text>
</comment>
<dbReference type="EMBL" id="AJ132845">
    <property type="protein sequence ID" value="CAB36999.1"/>
    <property type="molecule type" value="Genomic_RNA"/>
</dbReference>
<dbReference type="EMBL" id="AJ011934">
    <property type="protein sequence ID" value="CAA09878.1"/>
    <property type="molecule type" value="Genomic_RNA"/>
</dbReference>
<dbReference type="Proteomes" id="UP000008254">
    <property type="component" value="Genome"/>
</dbReference>
<dbReference type="GO" id="GO:0030430">
    <property type="term" value="C:host cell cytoplasm"/>
    <property type="evidence" value="ECO:0007669"/>
    <property type="project" value="UniProtKB-KW"/>
</dbReference>
<dbReference type="GO" id="GO:0044219">
    <property type="term" value="C:host cell plasmodesma"/>
    <property type="evidence" value="ECO:0007669"/>
    <property type="project" value="UniProtKB-SubCell"/>
</dbReference>
<dbReference type="GO" id="GO:0044163">
    <property type="term" value="C:host cytoskeleton"/>
    <property type="evidence" value="ECO:0007669"/>
    <property type="project" value="UniProtKB-SubCell"/>
</dbReference>
<dbReference type="GO" id="GO:0003723">
    <property type="term" value="F:RNA binding"/>
    <property type="evidence" value="ECO:0007669"/>
    <property type="project" value="UniProtKB-KW"/>
</dbReference>
<dbReference type="GO" id="GO:0046740">
    <property type="term" value="P:transport of virus in host, cell to cell"/>
    <property type="evidence" value="ECO:0007669"/>
    <property type="project" value="UniProtKB-KW"/>
</dbReference>
<dbReference type="InterPro" id="IPR001022">
    <property type="entry name" value="TMV_movement"/>
</dbReference>
<dbReference type="InterPro" id="IPR028919">
    <property type="entry name" value="Viral_movement"/>
</dbReference>
<dbReference type="Pfam" id="PF01107">
    <property type="entry name" value="MP"/>
    <property type="match status" value="1"/>
</dbReference>
<dbReference type="PRINTS" id="PR00964">
    <property type="entry name" value="MOVEMENT"/>
</dbReference>
<evidence type="ECO:0000250" key="1">
    <source>
        <dbReference type="UniProtKB" id="A0A0S4IJL0"/>
    </source>
</evidence>
<evidence type="ECO:0000250" key="2">
    <source>
        <dbReference type="UniProtKB" id="P03583"/>
    </source>
</evidence>
<evidence type="ECO:0000250" key="3">
    <source>
        <dbReference type="UniProtKB" id="P69513"/>
    </source>
</evidence>
<evidence type="ECO:0000256" key="4">
    <source>
        <dbReference type="SAM" id="MobiDB-lite"/>
    </source>
</evidence>
<evidence type="ECO:0000305" key="5"/>
<keyword id="KW-1031">Host cell junction</keyword>
<keyword id="KW-1035">Host cytoplasm</keyword>
<keyword id="KW-1037">Host cytoskeleton</keyword>
<keyword id="KW-0694">RNA-binding</keyword>
<keyword id="KW-0813">Transport</keyword>
<keyword id="KW-0916">Viral movement protein</keyword>
<organism>
    <name type="scientific">Tomato mosaic virus (strain S-1)</name>
    <name type="common">ToMV</name>
    <dbReference type="NCBI Taxonomy" id="138314"/>
    <lineage>
        <taxon>Viruses</taxon>
        <taxon>Riboviria</taxon>
        <taxon>Orthornavirae</taxon>
        <taxon>Kitrinoviricota</taxon>
        <taxon>Alsuviricetes</taxon>
        <taxon>Martellivirales</taxon>
        <taxon>Virgaviridae</taxon>
        <taxon>Tobamovirus</taxon>
        <taxon>Tomato mosaic virus</taxon>
    </lineage>
</organism>
<feature type="chain" id="PRO_0000144973" description="Movement protein">
    <location>
        <begin position="1"/>
        <end position="264"/>
    </location>
</feature>
<feature type="region of interest" description="Disordered" evidence="4">
    <location>
        <begin position="211"/>
        <end position="264"/>
    </location>
</feature>
<feature type="compositionally biased region" description="Basic and acidic residues" evidence="4">
    <location>
        <begin position="237"/>
        <end position="247"/>
    </location>
</feature>
<gene>
    <name type="primary">MP</name>
</gene>
<name>MVP_TOMS1</name>
<proteinExistence type="inferred from homology"/>
<protein>
    <recommendedName>
        <fullName>Movement protein</fullName>
    </recommendedName>
    <alternativeName>
        <fullName>30 kDa protein</fullName>
    </alternativeName>
    <alternativeName>
        <fullName>Cell-to-cell transport protein</fullName>
    </alternativeName>
</protein>
<reference key="1">
    <citation type="submission" date="1999-02" db="EMBL/GenBank/DDBJ databases">
        <title>Complete nucleotide sequence of a Chinese isolate of tomato mosaic virus.</title>
        <authorList>
            <person name="Zhou X."/>
            <person name="Xue C."/>
            <person name="Chen Q."/>
            <person name="Qi Y."/>
            <person name="Li D."/>
        </authorList>
    </citation>
    <scope>NUCLEOTIDE SEQUENCE [GENOMIC RNA]</scope>
</reference>
<reference key="2">
    <citation type="submission" date="1998-10" db="EMBL/GenBank/DDBJ databases">
        <title>Isolation and nucleotide sequence of the 30k and the coat protein cistron of a Chinese isolate of tomato mosaic virus.</title>
        <authorList>
            <person name="Zhou X."/>
            <person name="Xue C."/>
            <person name="Qi Y."/>
            <person name="Li D."/>
        </authorList>
    </citation>
    <scope>NUCLEOTIDE SEQUENCE [GENOMIC RNA] OF 1-200</scope>
</reference>
<accession>Q9YJQ9</accession>
<sequence>MALVVKGKVNINEFIDLSKSEKLLPSMFTPVKSVMVSKVDKIMVHENESLSEVNLLKGVKLIEGGYVCLVGLVVSGEWNLPDNCRGGVSVCLVDKRMERADEATLGSYYTAAAKKRFQFKVVPNYGITTKDAEKNIWQVLVNIKNVKMSAGYCPLSLEFVSVCIVYKNNTKLGLREKVTSVNDGGPMELSEEVVDEFMENVPMSVRLAKFRTKSSKRGPKNNNNLGKGRSGGRPKPKSFDEVEKEFDNLIEDEAETSVADSDSY</sequence>
<organismHost>
    <name type="scientific">Antirrhinum majus</name>
    <name type="common">Garden snapdragon</name>
    <dbReference type="NCBI Taxonomy" id="4151"/>
</organismHost>
<organismHost>
    <name type="scientific">Capsicum</name>
    <name type="common">peppers</name>
    <dbReference type="NCBI Taxonomy" id="4071"/>
</organismHost>
<organismHost>
    <name type="scientific">Delphinium</name>
    <dbReference type="NCBI Taxonomy" id="46246"/>
</organismHost>
<organismHost>
    <name type="scientific">Petunia</name>
    <dbReference type="NCBI Taxonomy" id="4101"/>
</organismHost>
<organismHost>
    <name type="scientific">Solanum lycopersicum</name>
    <name type="common">Tomato</name>
    <name type="synonym">Lycopersicon esculentum</name>
    <dbReference type="NCBI Taxonomy" id="4081"/>
</organismHost>
<organismHost>
    <name type="scientific">Tagetes</name>
    <name type="common">marigolds</name>
    <dbReference type="NCBI Taxonomy" id="13707"/>
</organismHost>